<protein>
    <recommendedName>
        <fullName evidence="1">Glycerol kinase</fullName>
        <ecNumber evidence="1">2.7.1.30</ecNumber>
    </recommendedName>
    <alternativeName>
        <fullName evidence="1">ATP:glycerol 3-phosphotransferase</fullName>
    </alternativeName>
    <alternativeName>
        <fullName evidence="1">Glycerokinase</fullName>
        <shortName evidence="1">GK</shortName>
    </alternativeName>
</protein>
<sequence>MSFVLAIDQGTTSSRAIVFRDDISIAAVAQQEFSQHFPASGWVEHEPEDIWSSTLATSRAAIEQAGLKASDIAAIGITNQRETVVLWDRVTGQAIHRAIVWQDRRTSEICARLKSEGHEPLITQKTGLIIDPYFSGTKIGWLLDQVPGARARAERGELLFGTVDCYLLWRLTGGKIHATDATNASRTLLFNIHTGQWDAELLALLNVPRSLLPEVKDSSADFGTSDQNLFGGSIAIRGIAGDQQAATIGQACFAPGMMKSTYGTGCFALLNTGSTPVKSNNKLLTTIAYQLNGQRTYALEGSIFVAGSAVQWLRDGLGIISHASETGPLADKSDSTQSVYLVPAFVGLGAPYWNPRLRGALFGLTRNTGPAELAHAALESVCYQTFDLWAAMRADWPDADEASIVLRVDGGMTASDWTMQRLADLLDAPVDRPMIQETTALGAAYLAGLSAGIFPEPQQFADNWRLQHRFKPSMSAATRARKLKGWAAAVRGLLATDEGE</sequence>
<comment type="function">
    <text evidence="1">Key enzyme in the regulation of glycerol uptake and metabolism. Catalyzes the phosphorylation of glycerol to yield sn-glycerol 3-phosphate.</text>
</comment>
<comment type="catalytic activity">
    <reaction evidence="1">
        <text>glycerol + ATP = sn-glycerol 3-phosphate + ADP + H(+)</text>
        <dbReference type="Rhea" id="RHEA:21644"/>
        <dbReference type="ChEBI" id="CHEBI:15378"/>
        <dbReference type="ChEBI" id="CHEBI:17754"/>
        <dbReference type="ChEBI" id="CHEBI:30616"/>
        <dbReference type="ChEBI" id="CHEBI:57597"/>
        <dbReference type="ChEBI" id="CHEBI:456216"/>
        <dbReference type="EC" id="2.7.1.30"/>
    </reaction>
</comment>
<comment type="activity regulation">
    <text evidence="1">Inhibited by fructose 1,6-bisphosphate (FBP).</text>
</comment>
<comment type="pathway">
    <text evidence="1">Polyol metabolism; glycerol degradation via glycerol kinase pathway; sn-glycerol 3-phosphate from glycerol: step 1/1.</text>
</comment>
<comment type="similarity">
    <text evidence="1">Belongs to the FGGY kinase family.</text>
</comment>
<proteinExistence type="inferred from homology"/>
<feature type="chain" id="PRO_1000020766" description="Glycerol kinase">
    <location>
        <begin position="1"/>
        <end position="500"/>
    </location>
</feature>
<feature type="binding site" evidence="1">
    <location>
        <position position="11"/>
    </location>
    <ligand>
        <name>ADP</name>
        <dbReference type="ChEBI" id="CHEBI:456216"/>
    </ligand>
</feature>
<feature type="binding site" evidence="1">
    <location>
        <position position="11"/>
    </location>
    <ligand>
        <name>ATP</name>
        <dbReference type="ChEBI" id="CHEBI:30616"/>
    </ligand>
</feature>
<feature type="binding site" evidence="1">
    <location>
        <position position="11"/>
    </location>
    <ligand>
        <name>sn-glycerol 3-phosphate</name>
        <dbReference type="ChEBI" id="CHEBI:57597"/>
    </ligand>
</feature>
<feature type="binding site" evidence="1">
    <location>
        <position position="12"/>
    </location>
    <ligand>
        <name>ATP</name>
        <dbReference type="ChEBI" id="CHEBI:30616"/>
    </ligand>
</feature>
<feature type="binding site" evidence="1">
    <location>
        <position position="13"/>
    </location>
    <ligand>
        <name>ATP</name>
        <dbReference type="ChEBI" id="CHEBI:30616"/>
    </ligand>
</feature>
<feature type="binding site" evidence="1">
    <location>
        <position position="15"/>
    </location>
    <ligand>
        <name>ADP</name>
        <dbReference type="ChEBI" id="CHEBI:456216"/>
    </ligand>
</feature>
<feature type="binding site" evidence="1">
    <location>
        <position position="81"/>
    </location>
    <ligand>
        <name>glycerol</name>
        <dbReference type="ChEBI" id="CHEBI:17754"/>
    </ligand>
</feature>
<feature type="binding site" evidence="1">
    <location>
        <position position="81"/>
    </location>
    <ligand>
        <name>sn-glycerol 3-phosphate</name>
        <dbReference type="ChEBI" id="CHEBI:57597"/>
    </ligand>
</feature>
<feature type="binding site" evidence="1">
    <location>
        <position position="82"/>
    </location>
    <ligand>
        <name>glycerol</name>
        <dbReference type="ChEBI" id="CHEBI:17754"/>
    </ligand>
</feature>
<feature type="binding site" evidence="1">
    <location>
        <position position="82"/>
    </location>
    <ligand>
        <name>sn-glycerol 3-phosphate</name>
        <dbReference type="ChEBI" id="CHEBI:57597"/>
    </ligand>
</feature>
<feature type="binding site" evidence="1">
    <location>
        <position position="133"/>
    </location>
    <ligand>
        <name>glycerol</name>
        <dbReference type="ChEBI" id="CHEBI:17754"/>
    </ligand>
</feature>
<feature type="binding site" evidence="1">
    <location>
        <position position="133"/>
    </location>
    <ligand>
        <name>sn-glycerol 3-phosphate</name>
        <dbReference type="ChEBI" id="CHEBI:57597"/>
    </ligand>
</feature>
<feature type="binding site" evidence="1">
    <location>
        <position position="242"/>
    </location>
    <ligand>
        <name>glycerol</name>
        <dbReference type="ChEBI" id="CHEBI:17754"/>
    </ligand>
</feature>
<feature type="binding site" evidence="1">
    <location>
        <position position="242"/>
    </location>
    <ligand>
        <name>sn-glycerol 3-phosphate</name>
        <dbReference type="ChEBI" id="CHEBI:57597"/>
    </ligand>
</feature>
<feature type="binding site" evidence="1">
    <location>
        <position position="243"/>
    </location>
    <ligand>
        <name>glycerol</name>
        <dbReference type="ChEBI" id="CHEBI:17754"/>
    </ligand>
</feature>
<feature type="binding site" evidence="1">
    <location>
        <position position="264"/>
    </location>
    <ligand>
        <name>ADP</name>
        <dbReference type="ChEBI" id="CHEBI:456216"/>
    </ligand>
</feature>
<feature type="binding site" evidence="1">
    <location>
        <position position="264"/>
    </location>
    <ligand>
        <name>ATP</name>
        <dbReference type="ChEBI" id="CHEBI:30616"/>
    </ligand>
</feature>
<feature type="binding site" evidence="1">
    <location>
        <position position="307"/>
    </location>
    <ligand>
        <name>ADP</name>
        <dbReference type="ChEBI" id="CHEBI:456216"/>
    </ligand>
</feature>
<feature type="binding site" evidence="1">
    <location>
        <position position="307"/>
    </location>
    <ligand>
        <name>ATP</name>
        <dbReference type="ChEBI" id="CHEBI:30616"/>
    </ligand>
</feature>
<feature type="binding site" evidence="1">
    <location>
        <position position="311"/>
    </location>
    <ligand>
        <name>ATP</name>
        <dbReference type="ChEBI" id="CHEBI:30616"/>
    </ligand>
</feature>
<feature type="binding site" evidence="1">
    <location>
        <position position="411"/>
    </location>
    <ligand>
        <name>ADP</name>
        <dbReference type="ChEBI" id="CHEBI:456216"/>
    </ligand>
</feature>
<feature type="binding site" evidence="1">
    <location>
        <position position="411"/>
    </location>
    <ligand>
        <name>ATP</name>
        <dbReference type="ChEBI" id="CHEBI:30616"/>
    </ligand>
</feature>
<dbReference type="EC" id="2.7.1.30" evidence="1"/>
<dbReference type="EMBL" id="CP000463">
    <property type="protein sequence ID" value="ABJ07703.1"/>
    <property type="molecule type" value="Genomic_DNA"/>
</dbReference>
<dbReference type="SMR" id="Q07K31"/>
<dbReference type="STRING" id="316055.RPE_3774"/>
<dbReference type="KEGG" id="rpe:RPE_3774"/>
<dbReference type="eggNOG" id="COG0554">
    <property type="taxonomic scope" value="Bacteria"/>
</dbReference>
<dbReference type="HOGENOM" id="CLU_009281_2_3_5"/>
<dbReference type="OrthoDB" id="9805576at2"/>
<dbReference type="UniPathway" id="UPA00618">
    <property type="reaction ID" value="UER00672"/>
</dbReference>
<dbReference type="GO" id="GO:0005829">
    <property type="term" value="C:cytosol"/>
    <property type="evidence" value="ECO:0007669"/>
    <property type="project" value="TreeGrafter"/>
</dbReference>
<dbReference type="GO" id="GO:0005524">
    <property type="term" value="F:ATP binding"/>
    <property type="evidence" value="ECO:0007669"/>
    <property type="project" value="UniProtKB-UniRule"/>
</dbReference>
<dbReference type="GO" id="GO:0004370">
    <property type="term" value="F:glycerol kinase activity"/>
    <property type="evidence" value="ECO:0000250"/>
    <property type="project" value="UniProtKB"/>
</dbReference>
<dbReference type="GO" id="GO:0019563">
    <property type="term" value="P:glycerol catabolic process"/>
    <property type="evidence" value="ECO:0007669"/>
    <property type="project" value="UniProtKB-UniRule"/>
</dbReference>
<dbReference type="GO" id="GO:0006071">
    <property type="term" value="P:glycerol metabolic process"/>
    <property type="evidence" value="ECO:0000250"/>
    <property type="project" value="UniProtKB"/>
</dbReference>
<dbReference type="GO" id="GO:0006072">
    <property type="term" value="P:glycerol-3-phosphate metabolic process"/>
    <property type="evidence" value="ECO:0007669"/>
    <property type="project" value="InterPro"/>
</dbReference>
<dbReference type="CDD" id="cd07786">
    <property type="entry name" value="FGGY_EcGK_like"/>
    <property type="match status" value="1"/>
</dbReference>
<dbReference type="FunFam" id="3.30.420.40:FF:000007">
    <property type="entry name" value="Glycerol kinase"/>
    <property type="match status" value="1"/>
</dbReference>
<dbReference type="FunFam" id="3.30.420.40:FF:000008">
    <property type="entry name" value="Glycerol kinase"/>
    <property type="match status" value="1"/>
</dbReference>
<dbReference type="Gene3D" id="3.30.420.40">
    <property type="match status" value="2"/>
</dbReference>
<dbReference type="HAMAP" id="MF_00186">
    <property type="entry name" value="Glycerol_kin"/>
    <property type="match status" value="1"/>
</dbReference>
<dbReference type="InterPro" id="IPR043129">
    <property type="entry name" value="ATPase_NBD"/>
</dbReference>
<dbReference type="InterPro" id="IPR000577">
    <property type="entry name" value="Carb_kinase_FGGY"/>
</dbReference>
<dbReference type="InterPro" id="IPR018483">
    <property type="entry name" value="Carb_kinase_FGGY_CS"/>
</dbReference>
<dbReference type="InterPro" id="IPR018485">
    <property type="entry name" value="FGGY_C"/>
</dbReference>
<dbReference type="InterPro" id="IPR018484">
    <property type="entry name" value="FGGY_N"/>
</dbReference>
<dbReference type="InterPro" id="IPR005999">
    <property type="entry name" value="Glycerol_kin"/>
</dbReference>
<dbReference type="NCBIfam" id="TIGR01311">
    <property type="entry name" value="glycerol_kin"/>
    <property type="match status" value="1"/>
</dbReference>
<dbReference type="NCBIfam" id="NF000756">
    <property type="entry name" value="PRK00047.1"/>
    <property type="match status" value="1"/>
</dbReference>
<dbReference type="PANTHER" id="PTHR10196:SF78">
    <property type="entry name" value="GLYCEROL KINASE"/>
    <property type="match status" value="1"/>
</dbReference>
<dbReference type="PANTHER" id="PTHR10196">
    <property type="entry name" value="SUGAR KINASE"/>
    <property type="match status" value="1"/>
</dbReference>
<dbReference type="Pfam" id="PF02782">
    <property type="entry name" value="FGGY_C"/>
    <property type="match status" value="1"/>
</dbReference>
<dbReference type="Pfam" id="PF00370">
    <property type="entry name" value="FGGY_N"/>
    <property type="match status" value="1"/>
</dbReference>
<dbReference type="PIRSF" id="PIRSF000538">
    <property type="entry name" value="GlpK"/>
    <property type="match status" value="1"/>
</dbReference>
<dbReference type="SUPFAM" id="SSF53067">
    <property type="entry name" value="Actin-like ATPase domain"/>
    <property type="match status" value="2"/>
</dbReference>
<dbReference type="PROSITE" id="PS00445">
    <property type="entry name" value="FGGY_KINASES_2"/>
    <property type="match status" value="1"/>
</dbReference>
<gene>
    <name evidence="1" type="primary">glpK</name>
    <name type="ordered locus">RPE_3774</name>
</gene>
<keyword id="KW-0067">ATP-binding</keyword>
<keyword id="KW-0319">Glycerol metabolism</keyword>
<keyword id="KW-0418">Kinase</keyword>
<keyword id="KW-0547">Nucleotide-binding</keyword>
<keyword id="KW-0808">Transferase</keyword>
<organism>
    <name type="scientific">Rhodopseudomonas palustris (strain BisA53)</name>
    <dbReference type="NCBI Taxonomy" id="316055"/>
    <lineage>
        <taxon>Bacteria</taxon>
        <taxon>Pseudomonadati</taxon>
        <taxon>Pseudomonadota</taxon>
        <taxon>Alphaproteobacteria</taxon>
        <taxon>Hyphomicrobiales</taxon>
        <taxon>Nitrobacteraceae</taxon>
        <taxon>Rhodopseudomonas</taxon>
    </lineage>
</organism>
<accession>Q07K31</accession>
<evidence type="ECO:0000255" key="1">
    <source>
        <dbReference type="HAMAP-Rule" id="MF_00186"/>
    </source>
</evidence>
<name>GLPK_RHOP5</name>
<reference key="1">
    <citation type="submission" date="2006-09" db="EMBL/GenBank/DDBJ databases">
        <title>Complete sequence of Rhodopseudomonas palustris BisA53.</title>
        <authorList>
            <consortium name="US DOE Joint Genome Institute"/>
            <person name="Copeland A."/>
            <person name="Lucas S."/>
            <person name="Lapidus A."/>
            <person name="Barry K."/>
            <person name="Detter J.C."/>
            <person name="Glavina del Rio T."/>
            <person name="Hammon N."/>
            <person name="Israni S."/>
            <person name="Dalin E."/>
            <person name="Tice H."/>
            <person name="Pitluck S."/>
            <person name="Chain P."/>
            <person name="Malfatti S."/>
            <person name="Shin M."/>
            <person name="Vergez L."/>
            <person name="Schmutz J."/>
            <person name="Larimer F."/>
            <person name="Land M."/>
            <person name="Hauser L."/>
            <person name="Pelletier D.A."/>
            <person name="Kyrpides N."/>
            <person name="Kim E."/>
            <person name="Harwood C.S."/>
            <person name="Oda Y."/>
            <person name="Richardson P."/>
        </authorList>
    </citation>
    <scope>NUCLEOTIDE SEQUENCE [LARGE SCALE GENOMIC DNA]</scope>
    <source>
        <strain>BisA53</strain>
    </source>
</reference>